<dbReference type="EC" id="2.5.1.25" evidence="1 2 3"/>
<dbReference type="EMBL" id="D64044">
    <property type="protein sequence ID" value="BAA10924.1"/>
    <property type="status" value="ALT_INIT"/>
    <property type="molecule type" value="Genomic_DNA"/>
</dbReference>
<dbReference type="EMBL" id="U00096">
    <property type="protein sequence ID" value="AAC75636.2"/>
    <property type="molecule type" value="Genomic_DNA"/>
</dbReference>
<dbReference type="EMBL" id="AP009048">
    <property type="protein sequence ID" value="BAE76753.1"/>
    <property type="molecule type" value="Genomic_DNA"/>
</dbReference>
<dbReference type="PIR" id="F65036">
    <property type="entry name" value="F65036"/>
</dbReference>
<dbReference type="RefSeq" id="NP_417078.4">
    <property type="nucleotide sequence ID" value="NC_000913.3"/>
</dbReference>
<dbReference type="RefSeq" id="WP_001300438.1">
    <property type="nucleotide sequence ID" value="NZ_LN832404.1"/>
</dbReference>
<dbReference type="BioGRID" id="4261901">
    <property type="interactions" value="6"/>
</dbReference>
<dbReference type="BioGRID" id="851395">
    <property type="interactions" value="1"/>
</dbReference>
<dbReference type="DIP" id="DIP-12067N"/>
<dbReference type="FunCoup" id="Q47319">
    <property type="interactions" value="260"/>
</dbReference>
<dbReference type="IntAct" id="Q47319">
    <property type="interactions" value="2"/>
</dbReference>
<dbReference type="STRING" id="511145.b2583"/>
<dbReference type="PaxDb" id="511145-b2583"/>
<dbReference type="EnsemblBacteria" id="AAC75636">
    <property type="protein sequence ID" value="AAC75636"/>
    <property type="gene ID" value="b2583"/>
</dbReference>
<dbReference type="GeneID" id="947057"/>
<dbReference type="KEGG" id="ecj:JW5409"/>
<dbReference type="KEGG" id="eco:b2583"/>
<dbReference type="KEGG" id="ecoc:C3026_14315"/>
<dbReference type="PATRIC" id="fig|511145.12.peg.2686"/>
<dbReference type="EchoBASE" id="EB3975"/>
<dbReference type="eggNOG" id="COG3148">
    <property type="taxonomic scope" value="Bacteria"/>
</dbReference>
<dbReference type="HOGENOM" id="CLU_066458_1_0_6"/>
<dbReference type="InParanoid" id="Q47319"/>
<dbReference type="OMA" id="WQPYVVF"/>
<dbReference type="OrthoDB" id="370626at2"/>
<dbReference type="PhylomeDB" id="Q47319"/>
<dbReference type="BioCyc" id="EcoCyc:G7349-MONOMER"/>
<dbReference type="BioCyc" id="MetaCyc:G7349-MONOMER"/>
<dbReference type="PRO" id="PR:Q47319"/>
<dbReference type="Proteomes" id="UP000000625">
    <property type="component" value="Chromosome"/>
</dbReference>
<dbReference type="GO" id="GO:0016432">
    <property type="term" value="F:tRNA-uridine aminocarboxypropyltransferase activity"/>
    <property type="evidence" value="ECO:0000314"/>
    <property type="project" value="UniProtKB"/>
</dbReference>
<dbReference type="GO" id="GO:0008270">
    <property type="term" value="F:zinc ion binding"/>
    <property type="evidence" value="ECO:0000314"/>
    <property type="project" value="EcoCyc"/>
</dbReference>
<dbReference type="GO" id="GO:0006400">
    <property type="term" value="P:tRNA modification"/>
    <property type="evidence" value="ECO:0000314"/>
    <property type="project" value="UniProtKB"/>
</dbReference>
<dbReference type="InterPro" id="IPR005636">
    <property type="entry name" value="DTW"/>
</dbReference>
<dbReference type="InterPro" id="IPR039262">
    <property type="entry name" value="DTWD2/TAPT"/>
</dbReference>
<dbReference type="PANTHER" id="PTHR21392:SF1">
    <property type="entry name" value="TRNA-URIDINE AMINOCARBOXYPROPYLTRANSFERASE"/>
    <property type="match status" value="1"/>
</dbReference>
<dbReference type="PANTHER" id="PTHR21392">
    <property type="entry name" value="TRNA-URIDINE AMINOCARBOXYPROPYLTRANSFERASE 2"/>
    <property type="match status" value="1"/>
</dbReference>
<dbReference type="Pfam" id="PF03942">
    <property type="entry name" value="DTW"/>
    <property type="match status" value="1"/>
</dbReference>
<dbReference type="SMART" id="SM01144">
    <property type="entry name" value="DTW"/>
    <property type="match status" value="1"/>
</dbReference>
<name>TAPT_ECOLI</name>
<reference key="1">
    <citation type="submission" date="1995-09" db="EMBL/GenBank/DDBJ databases">
        <authorList>
            <person name="Nashimoto H."/>
            <person name="Saito N."/>
        </authorList>
    </citation>
    <scope>NUCLEOTIDE SEQUENCE [GENOMIC DNA]</scope>
    <source>
        <strain>K12</strain>
    </source>
</reference>
<reference key="2">
    <citation type="journal article" date="1997" name="Science">
        <title>The complete genome sequence of Escherichia coli K-12.</title>
        <authorList>
            <person name="Blattner F.R."/>
            <person name="Plunkett G. III"/>
            <person name="Bloch C.A."/>
            <person name="Perna N.T."/>
            <person name="Burland V."/>
            <person name="Riley M."/>
            <person name="Collado-Vides J."/>
            <person name="Glasner J.D."/>
            <person name="Rode C.K."/>
            <person name="Mayhew G.F."/>
            <person name="Gregor J."/>
            <person name="Davis N.W."/>
            <person name="Kirkpatrick H.A."/>
            <person name="Goeden M.A."/>
            <person name="Rose D.J."/>
            <person name="Mau B."/>
            <person name="Shao Y."/>
        </authorList>
    </citation>
    <scope>NUCLEOTIDE SEQUENCE [LARGE SCALE GENOMIC DNA]</scope>
    <source>
        <strain>K12 / MG1655 / ATCC 47076</strain>
    </source>
</reference>
<reference key="3">
    <citation type="journal article" date="2006" name="Mol. Syst. Biol.">
        <title>Highly accurate genome sequences of Escherichia coli K-12 strains MG1655 and W3110.</title>
        <authorList>
            <person name="Hayashi K."/>
            <person name="Morooka N."/>
            <person name="Yamamoto Y."/>
            <person name="Fujita K."/>
            <person name="Isono K."/>
            <person name="Choi S."/>
            <person name="Ohtsubo E."/>
            <person name="Baba T."/>
            <person name="Wanner B.L."/>
            <person name="Mori H."/>
            <person name="Horiuchi T."/>
        </authorList>
    </citation>
    <scope>NUCLEOTIDE SEQUENCE [LARGE SCALE GENOMIC DNA]</scope>
    <source>
        <strain>K12 / W3110 / ATCC 27325 / DSM 5911</strain>
    </source>
</reference>
<reference key="4">
    <citation type="journal article" date="1974" name="Biochem. Biophys. Res. Commun.">
        <title>Enzymatic synthesis of 3-(3-amino-3-carboxypropyl)uridine in Escherichia coli phenylalanine transfer RNA: transfer of the 3-amino-acid-3-carboxypropyl group from S-adenosylmethionine.</title>
        <authorList>
            <person name="Nishimura S."/>
            <person name="Taya Y."/>
            <person name="Kuchino Y."/>
            <person name="Oashi Z."/>
        </authorList>
    </citation>
    <scope>FUNCTION</scope>
    <scope>CATALYTIC ACTIVITY</scope>
</reference>
<reference key="5">
    <citation type="journal article" date="2014" name="Front. Genet.">
        <title>Analysis of two domains with novel RNA-processing activities throws light on the complex evolution of ribosomal RNA biogenesis.</title>
        <authorList>
            <person name="Burroughs A.M."/>
            <person name="Aravind L."/>
        </authorList>
    </citation>
    <scope>IDENTIFICATION OF THE TDD SUPERFAMILY</scope>
</reference>
<reference key="6">
    <citation type="journal article" date="2019" name="Nat. Commun.">
        <title>Biogenesis and functions of aminocarboxypropyluridine in tRNA.</title>
        <authorList>
            <person name="Takakura M."/>
            <person name="Ishiguro K."/>
            <person name="Akichika S."/>
            <person name="Miyauchi K."/>
            <person name="Suzuki T."/>
        </authorList>
    </citation>
    <scope>FUNCTION</scope>
    <scope>CATALYTIC ACTIVITY</scope>
    <scope>DISRUPTION PHENOTYPE</scope>
    <source>
        <strain>K12 / BW25113</strain>
    </source>
</reference>
<reference key="7">
    <citation type="journal article" date="2020" name="Nucleic Acids Res.">
        <title>Identification of the 3-amino-3-carboxypropyl (acp) transferase enzyme responsible for acp3U formation at position 47 in Escherichia coli tRNAs.</title>
        <authorList>
            <person name="Meyer B."/>
            <person name="Immer C."/>
            <person name="Kaiser S."/>
            <person name="Sharma S."/>
            <person name="Yang J."/>
            <person name="Watzinger P."/>
            <person name="Weiss L."/>
            <person name="Kotter A."/>
            <person name="Helm M."/>
            <person name="Seitz H.M."/>
            <person name="Koetter P."/>
            <person name="Kellner S."/>
            <person name="Entian K.D."/>
            <person name="Woehnert J."/>
        </authorList>
    </citation>
    <scope>FUNCTION</scope>
    <scope>CATALYTIC ACTIVITY</scope>
    <scope>ACTIVITY REGULATION</scope>
    <scope>SUBUNIT</scope>
    <scope>DOMAIN</scope>
    <scope>DISRUPTION PHENOTYPE</scope>
    <scope>MUTAGENESIS OF 1-MET--PRO-20; CYS-31; CYS-34; CYS-41; CYS-43; ASP-137 AND TRP-140</scope>
    <source>
        <strain>BW25993</strain>
    </source>
</reference>
<gene>
    <name evidence="4" type="primary">tapT</name>
    <name evidence="5" type="synonym">tuaA</name>
    <name type="synonym">yfiP</name>
    <name type="ordered locus">b2583</name>
    <name type="ordered locus">JW5409</name>
</gene>
<protein>
    <recommendedName>
        <fullName evidence="6">tRNA-uridine aminocarboxypropyltransferase</fullName>
        <ecNumber evidence="1 2 3">2.5.1.25</ecNumber>
    </recommendedName>
    <alternativeName>
        <fullName evidence="5">SAM-dependent 3-amino-3-carboxypropyl transferase</fullName>
    </alternativeName>
    <alternativeName>
        <fullName evidence="5">tRNA U47 acp transferase A</fullName>
    </alternativeName>
    <alternativeName>
        <fullName evidence="4">tRNA aminocarboxypropyltransferase</fullName>
    </alternativeName>
</protein>
<accession>Q47319</accession>
<accession>Q2MAF3</accession>
<comment type="function">
    <text evidence="1 2 3">Catalyzes the formation of 3-(3-amino-3-carboxypropyl)uridine (acp3U) at position 47 of tRNAs (PubMed:31804502, PubMed:31863583, PubMed:4597321). Acp3U47 confers thermal stability on tRNA (PubMed:31804502).</text>
</comment>
<comment type="catalytic activity">
    <reaction evidence="1 2 3">
        <text>a uridine in tRNA + S-adenosyl-L-methionine = a 3-[(3S)-3-amino-3-carboxypropyl]uridine in tRNA + S-methyl-5'-thioadenosine + H(+)</text>
        <dbReference type="Rhea" id="RHEA:62432"/>
        <dbReference type="Rhea" id="RHEA-COMP:13339"/>
        <dbReference type="Rhea" id="RHEA-COMP:16092"/>
        <dbReference type="ChEBI" id="CHEBI:15378"/>
        <dbReference type="ChEBI" id="CHEBI:17509"/>
        <dbReference type="ChEBI" id="CHEBI:59789"/>
        <dbReference type="ChEBI" id="CHEBI:65315"/>
        <dbReference type="ChEBI" id="CHEBI:82930"/>
        <dbReference type="EC" id="2.5.1.25"/>
    </reaction>
    <physiologicalReaction direction="left-to-right" evidence="1 2 3">
        <dbReference type="Rhea" id="RHEA:62433"/>
    </physiologicalReaction>
</comment>
<comment type="catalytic activity">
    <reaction evidence="3">
        <text>uridine(47) in tRNA(Phe) + S-adenosyl-L-methionine = 3-[(3S)-3-amino-3-carboxypropyl]uridine(47) in tRNA(Phe) + S-methyl-5'-thioadenosine + H(+)</text>
        <dbReference type="Rhea" id="RHEA:12300"/>
        <dbReference type="Rhea" id="RHEA-COMP:10427"/>
        <dbReference type="Rhea" id="RHEA-COMP:10428"/>
        <dbReference type="ChEBI" id="CHEBI:15378"/>
        <dbReference type="ChEBI" id="CHEBI:17509"/>
        <dbReference type="ChEBI" id="CHEBI:59789"/>
        <dbReference type="ChEBI" id="CHEBI:65315"/>
        <dbReference type="ChEBI" id="CHEBI:82930"/>
        <dbReference type="EC" id="2.5.1.25"/>
    </reaction>
    <physiologicalReaction direction="left-to-right" evidence="3">
        <dbReference type="Rhea" id="RHEA:12301"/>
    </physiologicalReaction>
</comment>
<comment type="activity regulation">
    <text evidence="2">The degree of the acp3U modification at U47 is dependent on the presence of the m7G modification at the preceding nucleotide G46. It also depends on medium conditions.</text>
</comment>
<comment type="subunit">
    <text evidence="2">Monomer in solution.</text>
</comment>
<comment type="domain">
    <text evidence="9">The N-terminal domain binds zinc and is important for activity (PubMed:31863583).</text>
</comment>
<comment type="disruption phenotype">
    <text evidence="1 2">Deletion of the gene leads to the loss of the acp3U modification (PubMed:31804502, PubMed:31863583). Mutant has no obvious defect under normal growth conditions (PubMed:31863583). It shows motility defect and genome instability under continuous heat stress (PubMed:31804502).</text>
</comment>
<comment type="similarity">
    <text evidence="7 8">Belongs to the TDD superfamily. DTWD2 family. TapT subfamily.</text>
</comment>
<comment type="sequence caution" evidence="6">
    <conflict type="erroneous initiation">
        <sequence resource="EMBL-CDS" id="BAA10924"/>
    </conflict>
    <text>Extended N-terminus.</text>
</comment>
<proteinExistence type="evidence at protein level"/>
<evidence type="ECO:0000269" key="1">
    <source>
    </source>
</evidence>
<evidence type="ECO:0000269" key="2">
    <source>
    </source>
</evidence>
<evidence type="ECO:0000269" key="3">
    <source>
    </source>
</evidence>
<evidence type="ECO:0000303" key="4">
    <source>
    </source>
</evidence>
<evidence type="ECO:0000303" key="5">
    <source>
    </source>
</evidence>
<evidence type="ECO:0000305" key="6"/>
<evidence type="ECO:0000305" key="7">
    <source>
    </source>
</evidence>
<evidence type="ECO:0000305" key="8">
    <source>
    </source>
</evidence>
<evidence type="ECO:0000305" key="9">
    <source>
    </source>
</evidence>
<keyword id="KW-0479">Metal-binding</keyword>
<keyword id="KW-1185">Reference proteome</keyword>
<keyword id="KW-0949">S-adenosyl-L-methionine</keyword>
<keyword id="KW-0808">Transferase</keyword>
<keyword id="KW-0819">tRNA processing</keyword>
<keyword id="KW-0862">Zinc</keyword>
<organism>
    <name type="scientific">Escherichia coli (strain K12)</name>
    <dbReference type="NCBI Taxonomy" id="83333"/>
    <lineage>
        <taxon>Bacteria</taxon>
        <taxon>Pseudomonadati</taxon>
        <taxon>Pseudomonadota</taxon>
        <taxon>Gammaproteobacteria</taxon>
        <taxon>Enterobacterales</taxon>
        <taxon>Enterobacteriaceae</taxon>
        <taxon>Escherichia</taxon>
    </lineage>
</organism>
<sequence>MTENAVLQLRAERIARATRPFLARGNRVRRCQRCLLPEKLCLCSTITPAQAKSRFCLLMFDTEPMKPSNTGRLIADILPDTVAFQWSRTEPSQDLLELVQNPDYQPMVVFPASYADEQREVIFTPPAGKPPLFIMLDGTWPEARKMFRKSPYLDNLPVISVDLSRLSAYRLREAQAEGQYCTAEVAIALLDMAGDTGAAAGLGEHFTRFKTRYLAGKTQHLGSITAEQLESV</sequence>
<feature type="chain" id="PRO_0000169271" description="tRNA-uridine aminocarboxypropyltransferase">
    <location>
        <begin position="1"/>
        <end position="232"/>
    </location>
</feature>
<feature type="short sequence motif" description="DXTW" evidence="2">
    <location>
        <begin position="137"/>
        <end position="140"/>
    </location>
</feature>
<feature type="binding site" evidence="9">
    <location>
        <position position="31"/>
    </location>
    <ligand>
        <name>Zn(2+)</name>
        <dbReference type="ChEBI" id="CHEBI:29105"/>
    </ligand>
</feature>
<feature type="binding site" evidence="9">
    <location>
        <position position="34"/>
    </location>
    <ligand>
        <name>Zn(2+)</name>
        <dbReference type="ChEBI" id="CHEBI:29105"/>
    </ligand>
</feature>
<feature type="binding site" evidence="9">
    <location>
        <position position="41"/>
    </location>
    <ligand>
        <name>Zn(2+)</name>
        <dbReference type="ChEBI" id="CHEBI:29105"/>
    </ligand>
</feature>
<feature type="binding site" evidence="9">
    <location>
        <position position="43"/>
    </location>
    <ligand>
        <name>Zn(2+)</name>
        <dbReference type="ChEBI" id="CHEBI:29105"/>
    </ligand>
</feature>
<feature type="mutagenesis site" description="Complete loss of activity." evidence="2">
    <location>
        <begin position="1"/>
        <end position="20"/>
    </location>
</feature>
<feature type="mutagenesis site" description="Complete loss of activity; when associated with S-34." evidence="2">
    <original>C</original>
    <variation>S</variation>
    <location>
        <position position="31"/>
    </location>
</feature>
<feature type="mutagenesis site" description="Complete loss of activity; when associated with S-31." evidence="2">
    <original>C</original>
    <variation>S</variation>
    <location>
        <position position="34"/>
    </location>
</feature>
<feature type="mutagenesis site" description="Shows weak residual activity; when associated with S-43." evidence="2">
    <original>C</original>
    <variation>S</variation>
    <location>
        <position position="41"/>
    </location>
</feature>
<feature type="mutagenesis site" description="Shows weak residual activity; when associated with S-41." evidence="2">
    <original>C</original>
    <variation>S</variation>
    <location>
        <position position="43"/>
    </location>
</feature>
<feature type="mutagenesis site" description="Strong decrease in activity." evidence="2">
    <original>D</original>
    <variation>A</variation>
    <location>
        <position position="137"/>
    </location>
</feature>
<feature type="mutagenesis site" description="Strong decrease in activity." evidence="2">
    <original>W</original>
    <variation>A</variation>
    <location>
        <position position="140"/>
    </location>
</feature>